<keyword id="KW-0094">Blood coagulation</keyword>
<keyword id="KW-0106">Calcium</keyword>
<keyword id="KW-0165">Cleavage on pair of basic residues</keyword>
<keyword id="KW-1015">Disulfide bond</keyword>
<keyword id="KW-0245">EGF-like domain</keyword>
<keyword id="KW-0256">Endoplasmic reticulum</keyword>
<keyword id="KW-0301">Gamma-carboxyglutamic acid</keyword>
<keyword id="KW-0325">Glycoprotein</keyword>
<keyword id="KW-0333">Golgi apparatus</keyword>
<keyword id="KW-0356">Hemostasis</keyword>
<keyword id="KW-0378">Hydrolase</keyword>
<keyword id="KW-0379">Hydroxylation</keyword>
<keyword id="KW-0645">Protease</keyword>
<keyword id="KW-1185">Reference proteome</keyword>
<keyword id="KW-0677">Repeat</keyword>
<keyword id="KW-0964">Secreted</keyword>
<keyword id="KW-0720">Serine protease</keyword>
<keyword id="KW-0732">Signal</keyword>
<keyword id="KW-0865">Zymogen</keyword>
<comment type="function">
    <text evidence="3">Protein C is a vitamin K-dependent serine protease that regulates blood coagulation by inactivating factors Va and VIIIa in the presence of calcium ions and phospholipids. Exerts a protective effect on the endothelial cell barrier function.</text>
</comment>
<comment type="catalytic activity">
    <reaction>
        <text>Degradation of blood coagulation factors Va and VIIIa.</text>
        <dbReference type="EC" id="3.4.21.69"/>
    </reaction>
</comment>
<comment type="subunit">
    <text evidence="1">Synthesized as a single chain precursor, which is cleaved into a light chain and a heavy chain held together by a disulfide bond. The enzyme is then activated by thrombin, which cleaves a tetradecapeptide from the amino end of the heavy chain; this reaction, which occurs at the surface of endothelial cells, is strongly promoted by thrombomodulin (By similarity).</text>
</comment>
<comment type="subcellular location">
    <subcellularLocation>
        <location evidence="3">Secreted</location>
    </subcellularLocation>
    <subcellularLocation>
        <location evidence="3">Golgi apparatus</location>
    </subcellularLocation>
    <subcellularLocation>
        <location evidence="3">Endoplasmic reticulum</location>
    </subcellularLocation>
</comment>
<comment type="tissue specificity">
    <text>Plasma; synthesized in the liver.</text>
</comment>
<comment type="PTM">
    <text>The vitamin K-dependent, enzymatic carboxylation of some Glu residues allows the modified protein to bind calcium.</text>
</comment>
<comment type="PTM">
    <text evidence="1">The iron and 2-oxoglutarate dependent 3-hydroxylation of aspartate and asparagine is (R) stereospecific within EGF domains.</text>
</comment>
<comment type="miscellaneous">
    <text>Calcium also binds, with stronger affinity to another site, beyond the GLA domain. This GLA-independent binding site is necessary for the recognition of the thrombin-thrombomodulin complex.</text>
</comment>
<comment type="similarity">
    <text evidence="6">Belongs to the peptidase S1 family.</text>
</comment>
<evidence type="ECO:0000250" key="1"/>
<evidence type="ECO:0000250" key="2">
    <source>
        <dbReference type="UniProtKB" id="P00745"/>
    </source>
</evidence>
<evidence type="ECO:0000250" key="3">
    <source>
        <dbReference type="UniProtKB" id="P04070"/>
    </source>
</evidence>
<evidence type="ECO:0000255" key="4"/>
<evidence type="ECO:0000255" key="5">
    <source>
        <dbReference type="PROSITE-ProRule" id="PRU00076"/>
    </source>
</evidence>
<evidence type="ECO:0000255" key="6">
    <source>
        <dbReference type="PROSITE-ProRule" id="PRU00274"/>
    </source>
</evidence>
<evidence type="ECO:0000255" key="7">
    <source>
        <dbReference type="PROSITE-ProRule" id="PRU00463"/>
    </source>
</evidence>
<dbReference type="EC" id="3.4.21.69"/>
<dbReference type="EMBL" id="AJ001979">
    <property type="protein sequence ID" value="CAA05126.1"/>
    <property type="molecule type" value="Genomic_DNA"/>
</dbReference>
<dbReference type="EMBL" id="D43751">
    <property type="protein sequence ID" value="BAA07808.1"/>
    <property type="molecule type" value="Genomic_DNA"/>
</dbReference>
<dbReference type="RefSeq" id="NP_001013871.1">
    <property type="nucleotide sequence ID" value="NM_001013849.1"/>
</dbReference>
<dbReference type="RefSeq" id="XP_013976844.1">
    <property type="nucleotide sequence ID" value="XM_014121369.1"/>
</dbReference>
<dbReference type="RefSeq" id="XP_038281495.1">
    <property type="nucleotide sequence ID" value="XM_038425567.1"/>
</dbReference>
<dbReference type="SMR" id="Q28278"/>
<dbReference type="FunCoup" id="Q28278">
    <property type="interactions" value="50"/>
</dbReference>
<dbReference type="STRING" id="9615.ENSCAFP00000064602"/>
<dbReference type="MEROPS" id="S01.218"/>
<dbReference type="GlyCosmos" id="Q28278">
    <property type="glycosylation" value="4 sites, No reported glycans"/>
</dbReference>
<dbReference type="PaxDb" id="9612-ENSCAFP00000037192"/>
<dbReference type="Ensembl" id="ENSCAFT00000007235.5">
    <property type="protein sequence ID" value="ENSCAFP00000006700.3"/>
    <property type="gene ID" value="ENSCAFG00000004493.6"/>
</dbReference>
<dbReference type="Ensembl" id="ENSCAFT00030009089.1">
    <property type="protein sequence ID" value="ENSCAFP00030007975.1"/>
    <property type="gene ID" value="ENSCAFG00030004934.1"/>
</dbReference>
<dbReference type="Ensembl" id="ENSCAFT00040037166.1">
    <property type="protein sequence ID" value="ENSCAFP00040032380.1"/>
    <property type="gene ID" value="ENSCAFG00040020095.1"/>
</dbReference>
<dbReference type="Ensembl" id="ENSCAFT00845039524.1">
    <property type="protein sequence ID" value="ENSCAFP00845030975.1"/>
    <property type="gene ID" value="ENSCAFG00845022381.1"/>
</dbReference>
<dbReference type="GeneID" id="476104"/>
<dbReference type="KEGG" id="cfa:476104"/>
<dbReference type="CTD" id="5624"/>
<dbReference type="VEuPathDB" id="HostDB:ENSCAFG00845022381"/>
<dbReference type="VGNC" id="VGNC:45006">
    <property type="gene designation" value="PROC"/>
</dbReference>
<dbReference type="eggNOG" id="ENOG502QQ3W">
    <property type="taxonomic scope" value="Eukaryota"/>
</dbReference>
<dbReference type="GeneTree" id="ENSGT00940000154505"/>
<dbReference type="HOGENOM" id="CLU_006842_19_5_1"/>
<dbReference type="InParanoid" id="Q28278"/>
<dbReference type="OrthoDB" id="9028152at2759"/>
<dbReference type="Reactome" id="R-CFA-140875">
    <property type="pathway name" value="Common Pathway of Fibrin Clot Formation"/>
</dbReference>
<dbReference type="Reactome" id="R-CFA-159740">
    <property type="pathway name" value="Gamma-carboxylation of protein precursors"/>
</dbReference>
<dbReference type="Reactome" id="R-CFA-159763">
    <property type="pathway name" value="Transport of gamma-carboxylated protein precursors from the endoplasmic reticulum to the Golgi apparatus"/>
</dbReference>
<dbReference type="Reactome" id="R-CFA-159782">
    <property type="pathway name" value="Removal of aminoterminal propeptides from gamma-carboxylated proteins"/>
</dbReference>
<dbReference type="Reactome" id="R-CFA-202733">
    <property type="pathway name" value="Cell surface interactions at the vascular wall"/>
</dbReference>
<dbReference type="Reactome" id="R-CFA-381426">
    <property type="pathway name" value="Regulation of Insulin-like Growth Factor (IGF) transport and uptake by Insulin-like Growth Factor Binding Proteins (IGFBPs)"/>
</dbReference>
<dbReference type="Reactome" id="R-CFA-8957275">
    <property type="pathway name" value="Post-translational protein phosphorylation"/>
</dbReference>
<dbReference type="Proteomes" id="UP000002254">
    <property type="component" value="Chromosome 19"/>
</dbReference>
<dbReference type="Proteomes" id="UP000694429">
    <property type="component" value="Chromosome 19"/>
</dbReference>
<dbReference type="Proteomes" id="UP000694542">
    <property type="component" value="Chromosome 19"/>
</dbReference>
<dbReference type="Proteomes" id="UP000805418">
    <property type="component" value="Chromosome 19"/>
</dbReference>
<dbReference type="Bgee" id="ENSCAFG00000004493">
    <property type="expression patterns" value="Expressed in liver and 21 other cell types or tissues"/>
</dbReference>
<dbReference type="GO" id="GO:0005783">
    <property type="term" value="C:endoplasmic reticulum"/>
    <property type="evidence" value="ECO:0000250"/>
    <property type="project" value="UniProtKB"/>
</dbReference>
<dbReference type="GO" id="GO:0005615">
    <property type="term" value="C:extracellular space"/>
    <property type="evidence" value="ECO:0000318"/>
    <property type="project" value="GO_Central"/>
</dbReference>
<dbReference type="GO" id="GO:0005794">
    <property type="term" value="C:Golgi apparatus"/>
    <property type="evidence" value="ECO:0000250"/>
    <property type="project" value="UniProtKB"/>
</dbReference>
<dbReference type="GO" id="GO:0005509">
    <property type="term" value="F:calcium ion binding"/>
    <property type="evidence" value="ECO:0007669"/>
    <property type="project" value="InterPro"/>
</dbReference>
<dbReference type="GO" id="GO:0004252">
    <property type="term" value="F:serine-type endopeptidase activity"/>
    <property type="evidence" value="ECO:0000250"/>
    <property type="project" value="UniProtKB"/>
</dbReference>
<dbReference type="GO" id="GO:0007596">
    <property type="term" value="P:blood coagulation"/>
    <property type="evidence" value="ECO:0000318"/>
    <property type="project" value="GO_Central"/>
</dbReference>
<dbReference type="GO" id="GO:0043066">
    <property type="term" value="P:negative regulation of apoptotic process"/>
    <property type="evidence" value="ECO:0007669"/>
    <property type="project" value="Ensembl"/>
</dbReference>
<dbReference type="GO" id="GO:0030195">
    <property type="term" value="P:negative regulation of blood coagulation"/>
    <property type="evidence" value="ECO:0000318"/>
    <property type="project" value="GO_Central"/>
</dbReference>
<dbReference type="GO" id="GO:0050819">
    <property type="term" value="P:negative regulation of coagulation"/>
    <property type="evidence" value="ECO:0000250"/>
    <property type="project" value="UniProtKB"/>
</dbReference>
<dbReference type="GO" id="GO:0050728">
    <property type="term" value="P:negative regulation of inflammatory response"/>
    <property type="evidence" value="ECO:0000250"/>
    <property type="project" value="UniProtKB"/>
</dbReference>
<dbReference type="GO" id="GO:1903142">
    <property type="term" value="P:positive regulation of establishment of endothelial barrier"/>
    <property type="evidence" value="ECO:0000250"/>
    <property type="project" value="UniProtKB"/>
</dbReference>
<dbReference type="GO" id="GO:0006508">
    <property type="term" value="P:proteolysis"/>
    <property type="evidence" value="ECO:0007669"/>
    <property type="project" value="UniProtKB-KW"/>
</dbReference>
<dbReference type="CDD" id="cd00054">
    <property type="entry name" value="EGF_CA"/>
    <property type="match status" value="1"/>
</dbReference>
<dbReference type="CDD" id="cd00190">
    <property type="entry name" value="Tryp_SPc"/>
    <property type="match status" value="1"/>
</dbReference>
<dbReference type="FunFam" id="2.40.10.10:FF:000365">
    <property type="match status" value="1"/>
</dbReference>
<dbReference type="FunFam" id="2.10.25.10:FF:000549">
    <property type="entry name" value="Vitamin K-dependent protein C"/>
    <property type="match status" value="1"/>
</dbReference>
<dbReference type="FunFam" id="2.10.25.10:FF:000567">
    <property type="entry name" value="Vitamin K-dependent protein C"/>
    <property type="match status" value="1"/>
</dbReference>
<dbReference type="FunFam" id="2.40.10.10:FF:000256">
    <property type="entry name" value="Vitamin K-dependent protein C"/>
    <property type="match status" value="1"/>
</dbReference>
<dbReference type="FunFam" id="4.10.740.10:FF:000001">
    <property type="entry name" value="vitamin K-dependent protein S"/>
    <property type="match status" value="1"/>
</dbReference>
<dbReference type="Gene3D" id="4.10.740.10">
    <property type="entry name" value="Coagulation Factor IX"/>
    <property type="match status" value="1"/>
</dbReference>
<dbReference type="Gene3D" id="2.10.25.10">
    <property type="entry name" value="Laminin"/>
    <property type="match status" value="2"/>
</dbReference>
<dbReference type="Gene3D" id="2.40.10.10">
    <property type="entry name" value="Trypsin-like serine proteases"/>
    <property type="match status" value="2"/>
</dbReference>
<dbReference type="InterPro" id="IPR017857">
    <property type="entry name" value="Coagulation_fac-like_Gla_dom"/>
</dbReference>
<dbReference type="InterPro" id="IPR001881">
    <property type="entry name" value="EGF-like_Ca-bd_dom"/>
</dbReference>
<dbReference type="InterPro" id="IPR000742">
    <property type="entry name" value="EGF-like_dom"/>
</dbReference>
<dbReference type="InterPro" id="IPR000152">
    <property type="entry name" value="EGF-type_Asp/Asn_hydroxyl_site"/>
</dbReference>
<dbReference type="InterPro" id="IPR018097">
    <property type="entry name" value="EGF_Ca-bd_CS"/>
</dbReference>
<dbReference type="InterPro" id="IPR035972">
    <property type="entry name" value="GLA-like_dom_SF"/>
</dbReference>
<dbReference type="InterPro" id="IPR000294">
    <property type="entry name" value="GLA_domain"/>
</dbReference>
<dbReference type="InterPro" id="IPR009030">
    <property type="entry name" value="Growth_fac_rcpt_cys_sf"/>
</dbReference>
<dbReference type="InterPro" id="IPR012224">
    <property type="entry name" value="Pept_S1A_FX"/>
</dbReference>
<dbReference type="InterPro" id="IPR050442">
    <property type="entry name" value="Peptidase_S1_coag_factors"/>
</dbReference>
<dbReference type="InterPro" id="IPR009003">
    <property type="entry name" value="Peptidase_S1_PA"/>
</dbReference>
<dbReference type="InterPro" id="IPR043504">
    <property type="entry name" value="Peptidase_S1_PA_chymotrypsin"/>
</dbReference>
<dbReference type="InterPro" id="IPR001314">
    <property type="entry name" value="Peptidase_S1A"/>
</dbReference>
<dbReference type="InterPro" id="IPR001254">
    <property type="entry name" value="Trypsin_dom"/>
</dbReference>
<dbReference type="InterPro" id="IPR018114">
    <property type="entry name" value="TRYPSIN_HIS"/>
</dbReference>
<dbReference type="InterPro" id="IPR033116">
    <property type="entry name" value="TRYPSIN_SER"/>
</dbReference>
<dbReference type="PANTHER" id="PTHR24278">
    <property type="entry name" value="COAGULATION FACTOR"/>
    <property type="match status" value="1"/>
</dbReference>
<dbReference type="PANTHER" id="PTHR24278:SF0">
    <property type="entry name" value="VITAMIN K-DEPENDENT PROTEIN C"/>
    <property type="match status" value="1"/>
</dbReference>
<dbReference type="Pfam" id="PF14670">
    <property type="entry name" value="FXa_inhibition"/>
    <property type="match status" value="1"/>
</dbReference>
<dbReference type="Pfam" id="PF00594">
    <property type="entry name" value="Gla"/>
    <property type="match status" value="1"/>
</dbReference>
<dbReference type="Pfam" id="PF00089">
    <property type="entry name" value="Trypsin"/>
    <property type="match status" value="1"/>
</dbReference>
<dbReference type="PIRSF" id="PIRSF001143">
    <property type="entry name" value="Factor_X"/>
    <property type="match status" value="1"/>
</dbReference>
<dbReference type="PRINTS" id="PR00722">
    <property type="entry name" value="CHYMOTRYPSIN"/>
</dbReference>
<dbReference type="PRINTS" id="PR00001">
    <property type="entry name" value="GLABLOOD"/>
</dbReference>
<dbReference type="SMART" id="SM00181">
    <property type="entry name" value="EGF"/>
    <property type="match status" value="2"/>
</dbReference>
<dbReference type="SMART" id="SM00179">
    <property type="entry name" value="EGF_CA"/>
    <property type="match status" value="2"/>
</dbReference>
<dbReference type="SMART" id="SM00069">
    <property type="entry name" value="GLA"/>
    <property type="match status" value="1"/>
</dbReference>
<dbReference type="SMART" id="SM00020">
    <property type="entry name" value="Tryp_SPc"/>
    <property type="match status" value="1"/>
</dbReference>
<dbReference type="SUPFAM" id="SSF57630">
    <property type="entry name" value="GLA-domain"/>
    <property type="match status" value="1"/>
</dbReference>
<dbReference type="SUPFAM" id="SSF57184">
    <property type="entry name" value="Growth factor receptor domain"/>
    <property type="match status" value="1"/>
</dbReference>
<dbReference type="SUPFAM" id="SSF50494">
    <property type="entry name" value="Trypsin-like serine proteases"/>
    <property type="match status" value="1"/>
</dbReference>
<dbReference type="PROSITE" id="PS00010">
    <property type="entry name" value="ASX_HYDROXYL"/>
    <property type="match status" value="1"/>
</dbReference>
<dbReference type="PROSITE" id="PS00022">
    <property type="entry name" value="EGF_1"/>
    <property type="match status" value="1"/>
</dbReference>
<dbReference type="PROSITE" id="PS01186">
    <property type="entry name" value="EGF_2"/>
    <property type="match status" value="2"/>
</dbReference>
<dbReference type="PROSITE" id="PS50026">
    <property type="entry name" value="EGF_3"/>
    <property type="match status" value="1"/>
</dbReference>
<dbReference type="PROSITE" id="PS01187">
    <property type="entry name" value="EGF_CA"/>
    <property type="match status" value="1"/>
</dbReference>
<dbReference type="PROSITE" id="PS00011">
    <property type="entry name" value="GLA_1"/>
    <property type="match status" value="1"/>
</dbReference>
<dbReference type="PROSITE" id="PS50998">
    <property type="entry name" value="GLA_2"/>
    <property type="match status" value="1"/>
</dbReference>
<dbReference type="PROSITE" id="PS50240">
    <property type="entry name" value="TRYPSIN_DOM"/>
    <property type="match status" value="1"/>
</dbReference>
<dbReference type="PROSITE" id="PS00134">
    <property type="entry name" value="TRYPSIN_HIS"/>
    <property type="match status" value="1"/>
</dbReference>
<dbReference type="PROSITE" id="PS00135">
    <property type="entry name" value="TRYPSIN_SER"/>
    <property type="match status" value="1"/>
</dbReference>
<feature type="signal peptide" evidence="4">
    <location>
        <begin position="1"/>
        <end position="20"/>
    </location>
</feature>
<feature type="propeptide" id="PRO_0000028103" evidence="1">
    <location>
        <begin position="21"/>
        <end position="42"/>
    </location>
</feature>
<feature type="chain" id="PRO_0000028104" description="Vitamin K-dependent protein C">
    <location>
        <begin position="43"/>
        <end position="456"/>
    </location>
</feature>
<feature type="chain" id="PRO_0000028105" description="Vitamin K-dependent protein C light chain">
    <location>
        <begin position="43"/>
        <end position="197"/>
    </location>
</feature>
<feature type="chain" id="PRO_0000028106" description="Vitamin K-dependent protein C heavy chain">
    <location>
        <begin position="200"/>
        <end position="456"/>
    </location>
</feature>
<feature type="domain" description="Gla" evidence="7">
    <location>
        <begin position="47"/>
        <end position="88"/>
    </location>
</feature>
<feature type="domain" description="EGF-like 1" evidence="5">
    <location>
        <begin position="97"/>
        <end position="132"/>
    </location>
</feature>
<feature type="domain" description="EGF-like 2" evidence="5">
    <location>
        <begin position="136"/>
        <end position="176"/>
    </location>
</feature>
<feature type="domain" description="Peptidase S1" evidence="6">
    <location>
        <begin position="211"/>
        <end position="445"/>
    </location>
</feature>
<feature type="active site" description="Charge relay system" evidence="1">
    <location>
        <position position="252"/>
    </location>
</feature>
<feature type="active site" description="Charge relay system" evidence="1">
    <location>
        <position position="298"/>
    </location>
</feature>
<feature type="active site" description="Charge relay system" evidence="1">
    <location>
        <position position="397"/>
    </location>
</feature>
<feature type="modified residue" description="4-carboxyglutamate" evidence="2 7">
    <location>
        <position position="48"/>
    </location>
</feature>
<feature type="modified residue" description="4-carboxyglutamate" evidence="2 7">
    <location>
        <position position="49"/>
    </location>
</feature>
<feature type="modified residue" description="4-carboxyglutamate" evidence="2 7">
    <location>
        <position position="56"/>
    </location>
</feature>
<feature type="modified residue" description="4-carboxyglutamate" evidence="2 7">
    <location>
        <position position="58"/>
    </location>
</feature>
<feature type="modified residue" description="4-carboxyglutamate" evidence="2 7">
    <location>
        <position position="61"/>
    </location>
</feature>
<feature type="modified residue" description="4-carboxyglutamate" evidence="2 7">
    <location>
        <position position="62"/>
    </location>
</feature>
<feature type="modified residue" description="4-carboxyglutamate" evidence="2 7">
    <location>
        <position position="67"/>
    </location>
</feature>
<feature type="modified residue" description="4-carboxyglutamate" evidence="2 7">
    <location>
        <position position="68"/>
    </location>
</feature>
<feature type="modified residue" description="4-carboxyglutamate" evidence="2 7">
    <location>
        <position position="71"/>
    </location>
</feature>
<feature type="modified residue" description="(3R)-3-hydroxyaspartate" evidence="1">
    <location>
        <position position="113"/>
    </location>
</feature>
<feature type="glycosylation site" description="N-linked (GlcNAc...) asparagine" evidence="4">
    <location>
        <position position="139"/>
    </location>
</feature>
<feature type="glycosylation site" description="N-linked (GlcNAc...) asparagine" evidence="4">
    <location>
        <position position="202"/>
    </location>
</feature>
<feature type="glycosylation site" description="N-linked (GlcNAc...) asparagine" evidence="4">
    <location>
        <position position="289"/>
    </location>
</feature>
<feature type="glycosylation site" description="N-linked (GlcNAc...) asparagine" evidence="4">
    <location>
        <position position="350"/>
    </location>
</feature>
<feature type="disulfide bond" evidence="1">
    <location>
        <begin position="59"/>
        <end position="64"/>
    </location>
</feature>
<feature type="disulfide bond" evidence="1">
    <location>
        <begin position="92"/>
        <end position="111"/>
    </location>
</feature>
<feature type="disulfide bond" evidence="1">
    <location>
        <begin position="101"/>
        <end position="106"/>
    </location>
</feature>
<feature type="disulfide bond" evidence="1">
    <location>
        <begin position="105"/>
        <end position="120"/>
    </location>
</feature>
<feature type="disulfide bond" evidence="1">
    <location>
        <begin position="122"/>
        <end position="131"/>
    </location>
</feature>
<feature type="disulfide bond" evidence="1">
    <location>
        <begin position="140"/>
        <end position="151"/>
    </location>
</feature>
<feature type="disulfide bond" evidence="1">
    <location>
        <begin position="147"/>
        <end position="160"/>
    </location>
</feature>
<feature type="disulfide bond" evidence="1">
    <location>
        <begin position="162"/>
        <end position="175"/>
    </location>
</feature>
<feature type="disulfide bond" description="Interchain (between light and heavy chains)" evidence="5 6 7">
    <location>
        <begin position="183"/>
        <end position="318"/>
    </location>
</feature>
<feature type="disulfide bond" evidence="1">
    <location>
        <begin position="237"/>
        <end position="253"/>
    </location>
</feature>
<feature type="disulfide bond" evidence="1">
    <location>
        <begin position="368"/>
        <end position="382"/>
    </location>
</feature>
<feature type="disulfide bond" evidence="1">
    <location>
        <begin position="393"/>
        <end position="421"/>
    </location>
</feature>
<protein>
    <recommendedName>
        <fullName>Vitamin K-dependent protein C</fullName>
        <ecNumber>3.4.21.69</ecNumber>
    </recommendedName>
    <alternativeName>
        <fullName>Anticoagulant protein C</fullName>
    </alternativeName>
    <alternativeName>
        <fullName>Autoprothrombin IIA</fullName>
    </alternativeName>
    <alternativeName>
        <fullName>Blood coagulation factor XIV</fullName>
    </alternativeName>
    <component>
        <recommendedName>
            <fullName>Vitamin K-dependent protein C light chain</fullName>
        </recommendedName>
    </component>
    <component>
        <recommendedName>
            <fullName>Vitamin K-dependent protein C heavy chain</fullName>
        </recommendedName>
    </component>
</protein>
<reference key="1">
    <citation type="journal article" date="1999" name="Mamm. Genome">
        <title>Molecular characterization and chromosomal assignment of the canine protein C gene.</title>
        <authorList>
            <person name="Leeb T."/>
            <person name="Kopp T."/>
            <person name="Deppe A."/>
            <person name="Breen M."/>
            <person name="Matis U."/>
            <person name="Brunnberg L."/>
            <person name="Brenig B."/>
        </authorList>
    </citation>
    <scope>NUCLEOTIDE SEQUENCE [GENOMIC DNA]</scope>
</reference>
<reference key="2">
    <citation type="journal article" date="1994" name="Br. J. Haematol.">
        <title>A comparative study of partial primary structures of the catalytic region of mammalian protein C.</title>
        <authorList>
            <person name="Murakawa M."/>
            <person name="Okamura T."/>
            <person name="Kamura T."/>
            <person name="Kuroiwa M."/>
            <person name="Harada M."/>
            <person name="Niho Y."/>
        </authorList>
    </citation>
    <scope>NUCLEOTIDE SEQUENCE [GENOMIC DNA] OF 273-429</scope>
</reference>
<proteinExistence type="evidence at transcript level"/>
<name>PROC_CANLF</name>
<sequence>MWQLASLSLLLTICGTCSTAAPPGSVFSSSESAHQVLRIRKRANSFLEEIRAGSLERECMEEICDFEEAKEIFQNVDDTLAYWSKYVDGDQCAALPPEHACDSPCCGHGSCIDGIGAFHCDCGRGWEGRFCQHEVSYINCSLDNGGCSHYCLEEEGGRHCSCAPGYRLGDDHLQCQPAVKFPCGRPGKQMEKKRKHLKRDTNQTDQIDPRLVNGKVTRRGESPWQVVLLDSKKKLACGAVLIHTSWVLTAAHCMEDSKKLIVRLGEYDLRRWEKGEMDVDIKEVLIHPNYSKSTTDNDIALLHLAQPAIFSQTIVPICLPDSGLAERELTQVGQETVVTGWGYRSETKRNRTFVLNFINIPVAPHNECIQAMYNMISENMLCAGILGDSRDACEGDSGGPMVTSFRGTWFLVGLVSWGEGCGRLHNYGIYTKVSRYLDWIHSHIRGEEASLENQVP</sequence>
<gene>
    <name type="primary">PROC</name>
</gene>
<accession>Q28278</accession>
<accession>Q9TTR0</accession>
<organism>
    <name type="scientific">Canis lupus familiaris</name>
    <name type="common">Dog</name>
    <name type="synonym">Canis familiaris</name>
    <dbReference type="NCBI Taxonomy" id="9615"/>
    <lineage>
        <taxon>Eukaryota</taxon>
        <taxon>Metazoa</taxon>
        <taxon>Chordata</taxon>
        <taxon>Craniata</taxon>
        <taxon>Vertebrata</taxon>
        <taxon>Euteleostomi</taxon>
        <taxon>Mammalia</taxon>
        <taxon>Eutheria</taxon>
        <taxon>Laurasiatheria</taxon>
        <taxon>Carnivora</taxon>
        <taxon>Caniformia</taxon>
        <taxon>Canidae</taxon>
        <taxon>Canis</taxon>
    </lineage>
</organism>